<name>TAL_METPP</name>
<accession>A2SKF9</accession>
<evidence type="ECO:0000250" key="1"/>
<evidence type="ECO:0000255" key="2">
    <source>
        <dbReference type="HAMAP-Rule" id="MF_00492"/>
    </source>
</evidence>
<protein>
    <recommendedName>
        <fullName evidence="2">Transaldolase</fullName>
        <ecNumber evidence="2">2.2.1.2</ecNumber>
    </recommendedName>
</protein>
<keyword id="KW-0963">Cytoplasm</keyword>
<keyword id="KW-0570">Pentose shunt</keyword>
<keyword id="KW-1185">Reference proteome</keyword>
<keyword id="KW-0704">Schiff base</keyword>
<keyword id="KW-0808">Transferase</keyword>
<feature type="chain" id="PRO_1000014504" description="Transaldolase">
    <location>
        <begin position="1"/>
        <end position="316"/>
    </location>
</feature>
<feature type="active site" description="Schiff-base intermediate with substrate" evidence="2">
    <location>
        <position position="126"/>
    </location>
</feature>
<gene>
    <name evidence="2" type="primary">tal</name>
    <name type="ordered locus">Mpe_A3095</name>
</gene>
<comment type="function">
    <text evidence="2">Transaldolase is important for the balance of metabolites in the pentose-phosphate pathway.</text>
</comment>
<comment type="catalytic activity">
    <reaction evidence="2">
        <text>D-sedoheptulose 7-phosphate + D-glyceraldehyde 3-phosphate = D-erythrose 4-phosphate + beta-D-fructose 6-phosphate</text>
        <dbReference type="Rhea" id="RHEA:17053"/>
        <dbReference type="ChEBI" id="CHEBI:16897"/>
        <dbReference type="ChEBI" id="CHEBI:57483"/>
        <dbReference type="ChEBI" id="CHEBI:57634"/>
        <dbReference type="ChEBI" id="CHEBI:59776"/>
        <dbReference type="EC" id="2.2.1.2"/>
    </reaction>
</comment>
<comment type="pathway">
    <text evidence="2">Carbohydrate degradation; pentose phosphate pathway; D-glyceraldehyde 3-phosphate and beta-D-fructose 6-phosphate from D-ribose 5-phosphate and D-xylulose 5-phosphate (non-oxidative stage): step 2/3.</text>
</comment>
<comment type="subunit">
    <text evidence="1">Homodimer.</text>
</comment>
<comment type="subcellular location">
    <subcellularLocation>
        <location evidence="2">Cytoplasm</location>
    </subcellularLocation>
</comment>
<comment type="similarity">
    <text evidence="2">Belongs to the transaldolase family. Type 1 subfamily.</text>
</comment>
<proteinExistence type="inferred from homology"/>
<sequence length="316" mass="34033">MSSQLEQLKAYTTVVADTGDFKQIAAFAPRDATTNPSLILKAVSQPAYAPLLAQTAAAHRGQPLDAIVDRVLVRFGCEILNVVPGRVSTEVDARLSFDAAATVARAQRIMALYESEGIARERVLIKIAATWEGIQAAKALEHHGIHCNLTLLFAFCQAVACGESGVRLISPFVGRIHDWHKKAAGARWDEAANAGANDPGVKSVAQIWRYFRKFGIETEVMGASFRNTGQILALAGCDLLTISPELLAQLQASEATVMRALDVDAALHCDAKALSFNEASFRYALNEDAMATEKLAEGIRAFAVDAAQLDRLIQAL</sequence>
<organism>
    <name type="scientific">Methylibium petroleiphilum (strain ATCC BAA-1232 / LMG 22953 / PM1)</name>
    <dbReference type="NCBI Taxonomy" id="420662"/>
    <lineage>
        <taxon>Bacteria</taxon>
        <taxon>Pseudomonadati</taxon>
        <taxon>Pseudomonadota</taxon>
        <taxon>Betaproteobacteria</taxon>
        <taxon>Burkholderiales</taxon>
        <taxon>Sphaerotilaceae</taxon>
        <taxon>Methylibium</taxon>
    </lineage>
</organism>
<dbReference type="EC" id="2.2.1.2" evidence="2"/>
<dbReference type="EMBL" id="CP000555">
    <property type="protein sequence ID" value="ABM96048.1"/>
    <property type="molecule type" value="Genomic_DNA"/>
</dbReference>
<dbReference type="RefSeq" id="WP_011830671.1">
    <property type="nucleotide sequence ID" value="NC_008825.1"/>
</dbReference>
<dbReference type="SMR" id="A2SKF9"/>
<dbReference type="STRING" id="420662.Mpe_A3095"/>
<dbReference type="KEGG" id="mpt:Mpe_A3095"/>
<dbReference type="eggNOG" id="COG0176">
    <property type="taxonomic scope" value="Bacteria"/>
</dbReference>
<dbReference type="HOGENOM" id="CLU_047470_0_1_4"/>
<dbReference type="UniPathway" id="UPA00115">
    <property type="reaction ID" value="UER00414"/>
</dbReference>
<dbReference type="Proteomes" id="UP000000366">
    <property type="component" value="Chromosome"/>
</dbReference>
<dbReference type="GO" id="GO:0005737">
    <property type="term" value="C:cytoplasm"/>
    <property type="evidence" value="ECO:0007669"/>
    <property type="project" value="UniProtKB-SubCell"/>
</dbReference>
<dbReference type="GO" id="GO:0004801">
    <property type="term" value="F:transaldolase activity"/>
    <property type="evidence" value="ECO:0000250"/>
    <property type="project" value="UniProtKB"/>
</dbReference>
<dbReference type="GO" id="GO:0005975">
    <property type="term" value="P:carbohydrate metabolic process"/>
    <property type="evidence" value="ECO:0007669"/>
    <property type="project" value="InterPro"/>
</dbReference>
<dbReference type="GO" id="GO:0006098">
    <property type="term" value="P:pentose-phosphate shunt"/>
    <property type="evidence" value="ECO:0007669"/>
    <property type="project" value="UniProtKB-UniRule"/>
</dbReference>
<dbReference type="CDD" id="cd00957">
    <property type="entry name" value="Transaldolase_TalAB"/>
    <property type="match status" value="1"/>
</dbReference>
<dbReference type="FunFam" id="3.20.20.70:FF:000002">
    <property type="entry name" value="Transaldolase"/>
    <property type="match status" value="1"/>
</dbReference>
<dbReference type="Gene3D" id="3.20.20.70">
    <property type="entry name" value="Aldolase class I"/>
    <property type="match status" value="1"/>
</dbReference>
<dbReference type="HAMAP" id="MF_00492">
    <property type="entry name" value="Transaldolase_1"/>
    <property type="match status" value="1"/>
</dbReference>
<dbReference type="InterPro" id="IPR013785">
    <property type="entry name" value="Aldolase_TIM"/>
</dbReference>
<dbReference type="InterPro" id="IPR001585">
    <property type="entry name" value="TAL/FSA"/>
</dbReference>
<dbReference type="InterPro" id="IPR004730">
    <property type="entry name" value="Transaldolase_1"/>
</dbReference>
<dbReference type="InterPro" id="IPR018225">
    <property type="entry name" value="Transaldolase_AS"/>
</dbReference>
<dbReference type="NCBIfam" id="TIGR00874">
    <property type="entry name" value="talAB"/>
    <property type="match status" value="1"/>
</dbReference>
<dbReference type="PANTHER" id="PTHR10683">
    <property type="entry name" value="TRANSALDOLASE"/>
    <property type="match status" value="1"/>
</dbReference>
<dbReference type="PANTHER" id="PTHR10683:SF18">
    <property type="entry name" value="TRANSALDOLASE"/>
    <property type="match status" value="1"/>
</dbReference>
<dbReference type="Pfam" id="PF00923">
    <property type="entry name" value="TAL_FSA"/>
    <property type="match status" value="1"/>
</dbReference>
<dbReference type="SUPFAM" id="SSF51569">
    <property type="entry name" value="Aldolase"/>
    <property type="match status" value="1"/>
</dbReference>
<dbReference type="PROSITE" id="PS01054">
    <property type="entry name" value="TRANSALDOLASE_1"/>
    <property type="match status" value="1"/>
</dbReference>
<dbReference type="PROSITE" id="PS00958">
    <property type="entry name" value="TRANSALDOLASE_2"/>
    <property type="match status" value="1"/>
</dbReference>
<reference key="1">
    <citation type="journal article" date="2007" name="J. Bacteriol.">
        <title>Whole-genome analysis of the methyl tert-butyl ether-degrading beta-proteobacterium Methylibium petroleiphilum PM1.</title>
        <authorList>
            <person name="Kane S.R."/>
            <person name="Chakicherla A.Y."/>
            <person name="Chain P.S.G."/>
            <person name="Schmidt R."/>
            <person name="Shin M.W."/>
            <person name="Legler T.C."/>
            <person name="Scow K.M."/>
            <person name="Larimer F.W."/>
            <person name="Lucas S.M."/>
            <person name="Richardson P.M."/>
            <person name="Hristova K.R."/>
        </authorList>
    </citation>
    <scope>NUCLEOTIDE SEQUENCE [LARGE SCALE GENOMIC DNA]</scope>
    <source>
        <strain>ATCC BAA-1232 / LMG 22953 / PM1</strain>
    </source>
</reference>